<keyword id="KW-0002">3D-structure</keyword>
<keyword id="KW-0051">Antiviral defense</keyword>
<keyword id="KW-0067">ATP-binding</keyword>
<keyword id="KW-0158">Chromosome</keyword>
<keyword id="KW-0227">DNA damage</keyword>
<keyword id="KW-0238">DNA-binding</keyword>
<keyword id="KW-0255">Endonuclease</keyword>
<keyword id="KW-0347">Helicase</keyword>
<keyword id="KW-0378">Hydrolase</keyword>
<keyword id="KW-0391">Immunity</keyword>
<keyword id="KW-0540">Nuclease</keyword>
<keyword id="KW-0547">Nucleotide-binding</keyword>
<keyword id="KW-0539">Nucleus</keyword>
<keyword id="KW-1267">Proteomics identification</keyword>
<keyword id="KW-1185">Reference proteome</keyword>
<keyword id="KW-0694">RNA-binding</keyword>
<keyword id="KW-0820">tRNA-binding</keyword>
<reference key="1">
    <citation type="journal article" date="2004" name="Nat. Genet.">
        <title>Complete sequencing and characterization of 21,243 full-length human cDNAs.</title>
        <authorList>
            <person name="Ota T."/>
            <person name="Suzuki Y."/>
            <person name="Nishikawa T."/>
            <person name="Otsuki T."/>
            <person name="Sugiyama T."/>
            <person name="Irie R."/>
            <person name="Wakamatsu A."/>
            <person name="Hayashi K."/>
            <person name="Sato H."/>
            <person name="Nagai K."/>
            <person name="Kimura K."/>
            <person name="Makita H."/>
            <person name="Sekine M."/>
            <person name="Obayashi M."/>
            <person name="Nishi T."/>
            <person name="Shibahara T."/>
            <person name="Tanaka T."/>
            <person name="Ishii S."/>
            <person name="Yamamoto J."/>
            <person name="Saito K."/>
            <person name="Kawai Y."/>
            <person name="Isono Y."/>
            <person name="Nakamura Y."/>
            <person name="Nagahari K."/>
            <person name="Murakami K."/>
            <person name="Yasuda T."/>
            <person name="Iwayanagi T."/>
            <person name="Wagatsuma M."/>
            <person name="Shiratori A."/>
            <person name="Sudo H."/>
            <person name="Hosoiri T."/>
            <person name="Kaku Y."/>
            <person name="Kodaira H."/>
            <person name="Kondo H."/>
            <person name="Sugawara M."/>
            <person name="Takahashi M."/>
            <person name="Kanda K."/>
            <person name="Yokoi T."/>
            <person name="Furuya T."/>
            <person name="Kikkawa E."/>
            <person name="Omura Y."/>
            <person name="Abe K."/>
            <person name="Kamihara K."/>
            <person name="Katsuta N."/>
            <person name="Sato K."/>
            <person name="Tanikawa M."/>
            <person name="Yamazaki M."/>
            <person name="Ninomiya K."/>
            <person name="Ishibashi T."/>
            <person name="Yamashita H."/>
            <person name="Murakawa K."/>
            <person name="Fujimori K."/>
            <person name="Tanai H."/>
            <person name="Kimata M."/>
            <person name="Watanabe M."/>
            <person name="Hiraoka S."/>
            <person name="Chiba Y."/>
            <person name="Ishida S."/>
            <person name="Ono Y."/>
            <person name="Takiguchi S."/>
            <person name="Watanabe S."/>
            <person name="Yosida M."/>
            <person name="Hotuta T."/>
            <person name="Kusano J."/>
            <person name="Kanehori K."/>
            <person name="Takahashi-Fujii A."/>
            <person name="Hara H."/>
            <person name="Tanase T.-O."/>
            <person name="Nomura Y."/>
            <person name="Togiya S."/>
            <person name="Komai F."/>
            <person name="Hara R."/>
            <person name="Takeuchi K."/>
            <person name="Arita M."/>
            <person name="Imose N."/>
            <person name="Musashino K."/>
            <person name="Yuuki H."/>
            <person name="Oshima A."/>
            <person name="Sasaki N."/>
            <person name="Aotsuka S."/>
            <person name="Yoshikawa Y."/>
            <person name="Matsunawa H."/>
            <person name="Ichihara T."/>
            <person name="Shiohata N."/>
            <person name="Sano S."/>
            <person name="Moriya S."/>
            <person name="Momiyama H."/>
            <person name="Satoh N."/>
            <person name="Takami S."/>
            <person name="Terashima Y."/>
            <person name="Suzuki O."/>
            <person name="Nakagawa S."/>
            <person name="Senoh A."/>
            <person name="Mizoguchi H."/>
            <person name="Goto Y."/>
            <person name="Shimizu F."/>
            <person name="Wakebe H."/>
            <person name="Hishigaki H."/>
            <person name="Watanabe T."/>
            <person name="Sugiyama A."/>
            <person name="Takemoto M."/>
            <person name="Kawakami B."/>
            <person name="Yamazaki M."/>
            <person name="Watanabe K."/>
            <person name="Kumagai A."/>
            <person name="Itakura S."/>
            <person name="Fukuzumi Y."/>
            <person name="Fujimori Y."/>
            <person name="Komiyama M."/>
            <person name="Tashiro H."/>
            <person name="Tanigami A."/>
            <person name="Fujiwara T."/>
            <person name="Ono T."/>
            <person name="Yamada K."/>
            <person name="Fujii Y."/>
            <person name="Ozaki K."/>
            <person name="Hirao M."/>
            <person name="Ohmori Y."/>
            <person name="Kawabata A."/>
            <person name="Hikiji T."/>
            <person name="Kobatake N."/>
            <person name="Inagaki H."/>
            <person name="Ikema Y."/>
            <person name="Okamoto S."/>
            <person name="Okitani R."/>
            <person name="Kawakami T."/>
            <person name="Noguchi S."/>
            <person name="Itoh T."/>
            <person name="Shigeta K."/>
            <person name="Senba T."/>
            <person name="Matsumura K."/>
            <person name="Nakajima Y."/>
            <person name="Mizuno T."/>
            <person name="Morinaga M."/>
            <person name="Sasaki M."/>
            <person name="Togashi T."/>
            <person name="Oyama M."/>
            <person name="Hata H."/>
            <person name="Watanabe M."/>
            <person name="Komatsu T."/>
            <person name="Mizushima-Sugano J."/>
            <person name="Satoh T."/>
            <person name="Shirai Y."/>
            <person name="Takahashi Y."/>
            <person name="Nakagawa K."/>
            <person name="Okumura K."/>
            <person name="Nagase T."/>
            <person name="Nomura N."/>
            <person name="Kikuchi H."/>
            <person name="Masuho Y."/>
            <person name="Yamashita R."/>
            <person name="Nakai K."/>
            <person name="Yada T."/>
            <person name="Nakamura Y."/>
            <person name="Ohara O."/>
            <person name="Isogai T."/>
            <person name="Sugano S."/>
        </authorList>
    </citation>
    <scope>NUCLEOTIDE SEQUENCE [LARGE SCALE MRNA]</scope>
    <scope>VARIANTS PHE-121 AND ASP-301</scope>
    <source>
        <tissue>Spleen</tissue>
    </source>
</reference>
<reference key="2">
    <citation type="journal article" date="2007" name="BMC Genomics">
        <title>The full-ORF clone resource of the German cDNA consortium.</title>
        <authorList>
            <person name="Bechtel S."/>
            <person name="Rosenfelder H."/>
            <person name="Duda A."/>
            <person name="Schmidt C.P."/>
            <person name="Ernst U."/>
            <person name="Wellenreuther R."/>
            <person name="Mehrle A."/>
            <person name="Schuster C."/>
            <person name="Bahr A."/>
            <person name="Bloecker H."/>
            <person name="Heubner D."/>
            <person name="Hoerlein A."/>
            <person name="Michel G."/>
            <person name="Wedler H."/>
            <person name="Koehrer K."/>
            <person name="Ottenwaelder B."/>
            <person name="Poustka A."/>
            <person name="Wiemann S."/>
            <person name="Schupp I."/>
        </authorList>
    </citation>
    <scope>NUCLEOTIDE SEQUENCE [LARGE SCALE MRNA]</scope>
    <scope>VARIANT ASP-301</scope>
    <source>
        <tissue>Skeletal muscle</tissue>
    </source>
</reference>
<reference key="3">
    <citation type="journal article" date="2006" name="Nature">
        <title>DNA sequence of human chromosome 17 and analysis of rearrangement in the human lineage.</title>
        <authorList>
            <person name="Zody M.C."/>
            <person name="Garber M."/>
            <person name="Adams D.J."/>
            <person name="Sharpe T."/>
            <person name="Harrow J."/>
            <person name="Lupski J.R."/>
            <person name="Nicholson C."/>
            <person name="Searle S.M."/>
            <person name="Wilming L."/>
            <person name="Young S.K."/>
            <person name="Abouelleil A."/>
            <person name="Allen N.R."/>
            <person name="Bi W."/>
            <person name="Bloom T."/>
            <person name="Borowsky M.L."/>
            <person name="Bugalter B.E."/>
            <person name="Butler J."/>
            <person name="Chang J.L."/>
            <person name="Chen C.-K."/>
            <person name="Cook A."/>
            <person name="Corum B."/>
            <person name="Cuomo C.A."/>
            <person name="de Jong P.J."/>
            <person name="DeCaprio D."/>
            <person name="Dewar K."/>
            <person name="FitzGerald M."/>
            <person name="Gilbert J."/>
            <person name="Gibson R."/>
            <person name="Gnerre S."/>
            <person name="Goldstein S."/>
            <person name="Grafham D.V."/>
            <person name="Grocock R."/>
            <person name="Hafez N."/>
            <person name="Hagopian D.S."/>
            <person name="Hart E."/>
            <person name="Norman C.H."/>
            <person name="Humphray S."/>
            <person name="Jaffe D.B."/>
            <person name="Jones M."/>
            <person name="Kamal M."/>
            <person name="Khodiyar V.K."/>
            <person name="LaButti K."/>
            <person name="Laird G."/>
            <person name="Lehoczky J."/>
            <person name="Liu X."/>
            <person name="Lokyitsang T."/>
            <person name="Loveland J."/>
            <person name="Lui A."/>
            <person name="Macdonald P."/>
            <person name="Major J.E."/>
            <person name="Matthews L."/>
            <person name="Mauceli E."/>
            <person name="McCarroll S.A."/>
            <person name="Mihalev A.H."/>
            <person name="Mudge J."/>
            <person name="Nguyen C."/>
            <person name="Nicol R."/>
            <person name="O'Leary S.B."/>
            <person name="Osoegawa K."/>
            <person name="Schwartz D.C."/>
            <person name="Shaw-Smith C."/>
            <person name="Stankiewicz P."/>
            <person name="Steward C."/>
            <person name="Swarbreck D."/>
            <person name="Venkataraman V."/>
            <person name="Whittaker C.A."/>
            <person name="Yang X."/>
            <person name="Zimmer A.R."/>
            <person name="Bradley A."/>
            <person name="Hubbard T."/>
            <person name="Birren B.W."/>
            <person name="Rogers J."/>
            <person name="Lander E.S."/>
            <person name="Nusbaum C."/>
        </authorList>
    </citation>
    <scope>NUCLEOTIDE SEQUENCE [LARGE SCALE GENOMIC DNA]</scope>
</reference>
<reference key="4">
    <citation type="submission" date="2005-09" db="EMBL/GenBank/DDBJ databases">
        <authorList>
            <person name="Mural R.J."/>
            <person name="Istrail S."/>
            <person name="Sutton G.G."/>
            <person name="Florea L."/>
            <person name="Halpern A.L."/>
            <person name="Mobarry C.M."/>
            <person name="Lippert R."/>
            <person name="Walenz B."/>
            <person name="Shatkay H."/>
            <person name="Dew I."/>
            <person name="Miller J.R."/>
            <person name="Flanigan M.J."/>
            <person name="Edwards N.J."/>
            <person name="Bolanos R."/>
            <person name="Fasulo D."/>
            <person name="Halldorsson B.V."/>
            <person name="Hannenhalli S."/>
            <person name="Turner R."/>
            <person name="Yooseph S."/>
            <person name="Lu F."/>
            <person name="Nusskern D.R."/>
            <person name="Shue B.C."/>
            <person name="Zheng X.H."/>
            <person name="Zhong F."/>
            <person name="Delcher A.L."/>
            <person name="Huson D.H."/>
            <person name="Kravitz S.A."/>
            <person name="Mouchard L."/>
            <person name="Reinert K."/>
            <person name="Remington K.A."/>
            <person name="Clark A.G."/>
            <person name="Waterman M.S."/>
            <person name="Eichler E.E."/>
            <person name="Adams M.D."/>
            <person name="Hunkapiller M.W."/>
            <person name="Myers E.W."/>
            <person name="Venter J.C."/>
        </authorList>
    </citation>
    <scope>NUCLEOTIDE SEQUENCE [LARGE SCALE GENOMIC DNA]</scope>
    <scope>VARIANT ASP-301</scope>
</reference>
<reference key="5">
    <citation type="journal article" date="2004" name="Genome Res.">
        <title>The status, quality, and expansion of the NIH full-length cDNA project: the Mammalian Gene Collection (MGC).</title>
        <authorList>
            <consortium name="The MGC Project Team"/>
        </authorList>
    </citation>
    <scope>NUCLEOTIDE SEQUENCE [LARGE SCALE MRNA]</scope>
    <scope>VARIANT ASP-301</scope>
    <source>
        <tissue>Skin</tissue>
    </source>
</reference>
<reference key="6">
    <citation type="journal article" date="2010" name="J. Biol. Chem.">
        <title>Role of interferon {alpha} (IFN{alpha})-inducible Schlafen-5 in regulation of anchorage-independent growth and invasion of malignant melanoma cells.</title>
        <authorList>
            <person name="Katsoulidis E."/>
            <person name="Mavrommatis E."/>
            <person name="Woodard J."/>
            <person name="Shields M.A."/>
            <person name="Sassano A."/>
            <person name="Carayol N."/>
            <person name="Sawicki K.T."/>
            <person name="Munshi H.G."/>
            <person name="Platanias L.C."/>
        </authorList>
    </citation>
    <scope>INDUCTION</scope>
</reference>
<reference key="7">
    <citation type="journal article" date="2011" name="BMC Syst. Biol.">
        <title>Initial characterization of the human central proteome.</title>
        <authorList>
            <person name="Burkard T.R."/>
            <person name="Planyavsky M."/>
            <person name="Kaupe I."/>
            <person name="Breitwieser F.P."/>
            <person name="Buerckstuemmer T."/>
            <person name="Bennett K.L."/>
            <person name="Superti-Furga G."/>
            <person name="Colinge J."/>
        </authorList>
    </citation>
    <scope>IDENTIFICATION BY MASS SPECTROMETRY [LARGE SCALE ANALYSIS]</scope>
</reference>
<reference key="8">
    <citation type="journal article" date="2012" name="Nature">
        <title>Codon-usage-based inhibition of HIV protein synthesis by human schlafen 11.</title>
        <authorList>
            <person name="Li M."/>
            <person name="Kao E."/>
            <person name="Gao X."/>
            <person name="Sandig H."/>
            <person name="Limmer K."/>
            <person name="Pavon-Eternod M."/>
            <person name="Jones T.E."/>
            <person name="Landry S."/>
            <person name="Pan T."/>
            <person name="Weitzman M.D."/>
            <person name="David M."/>
        </authorList>
    </citation>
    <scope>FUNCTION</scope>
    <scope>TRNA-BINDING</scope>
    <scope>INDUCTION</scope>
</reference>
<reference key="9">
    <citation type="journal article" date="2012" name="Proc. Natl. Acad. Sci. U.S.A.">
        <title>Putative DNA/RNA helicase Schlafen-11 (SLFN11) sensitizes cancer cells to DNA-damaging agents.</title>
        <authorList>
            <person name="Zoppoli G."/>
            <person name="Regairaz M."/>
            <person name="Leo E."/>
            <person name="Reinhold W.C."/>
            <person name="Varma S."/>
            <person name="Ballestrero A."/>
            <person name="Doroshow J.H."/>
            <person name="Pommier Y."/>
        </authorList>
    </citation>
    <scope>FUNCTION</scope>
    <scope>SUBCELLULAR LOCATION</scope>
    <scope>TISSUE SPECIFICITY</scope>
</reference>
<reference key="10">
    <citation type="journal article" date="2016" name="EMBO Rep.">
        <title>SLFN11 inhibits checkpoint maintenance and homologous recombination repair.</title>
        <authorList>
            <person name="Mu Y."/>
            <person name="Lou J."/>
            <person name="Srivastava M."/>
            <person name="Zhao B."/>
            <person name="Feng X.H."/>
            <person name="Liu T."/>
            <person name="Chen J."/>
            <person name="Huang J."/>
        </authorList>
    </citation>
    <scope>FUNCTION</scope>
    <scope>SUBCELLULAR LOCATION</scope>
    <scope>INTERACTION WITH RPA1</scope>
    <scope>MUTAGENESIS OF LYS-605 AND ASP-668</scope>
</reference>
<reference key="11">
    <citation type="journal article" date="2016" name="Oncotarget">
        <title>Epigenetic inactivation of the putative DNA/RNA helicase SLFN11 in human cancer confers resistance to platinum drugs.</title>
        <authorList>
            <person name="Nogales V."/>
            <person name="Reinhold W.C."/>
            <person name="Varma S."/>
            <person name="Martinez-Cardus A."/>
            <person name="Moutinho C."/>
            <person name="Moran S."/>
            <person name="Heyn H."/>
            <person name="Sebio A."/>
            <person name="Barnadas A."/>
            <person name="Pommier Y."/>
            <person name="Esteller M."/>
        </authorList>
    </citation>
    <scope>INDUCTION</scope>
    <scope>INTERACTION WITH DHX9</scope>
</reference>
<reference key="12">
    <citation type="journal article" date="2017" name="Cancer Cell">
        <title>Chemosensitive relapse in small cell lung cancer proceeds through an EZH2-SLFN11 axis.</title>
        <authorList>
            <person name="Gardner E.E."/>
            <person name="Lok B.H."/>
            <person name="Schneeberger V.E."/>
            <person name="Desmeules P."/>
            <person name="Miles L.A."/>
            <person name="Arnold P.K."/>
            <person name="Ni A."/>
            <person name="Khodos I."/>
            <person name="de Stanchina E."/>
            <person name="Nguyen T."/>
            <person name="Sage J."/>
            <person name="Campbell J.E."/>
            <person name="Ribich S."/>
            <person name="Rekhtman N."/>
            <person name="Dowlati A."/>
            <person name="Massion P.P."/>
            <person name="Rudin C.M."/>
            <person name="Poirier J.T."/>
        </authorList>
    </citation>
    <scope>INDUCTION</scope>
</reference>
<reference key="13">
    <citation type="journal article" date="2017" name="Clin. Cancer Res.">
        <title>PARP inhibitor activity correlates with SLFN11 expression and demonstrates synergy with temozolomide in small cell lung cancer.</title>
        <authorList>
            <person name="Lok B.H."/>
            <person name="Gardner E.E."/>
            <person name="Schneeberger V.E."/>
            <person name="Ni A."/>
            <person name="Desmeules P."/>
            <person name="Rekhtman N."/>
            <person name="de Stanchina E."/>
            <person name="Teicher B.A."/>
            <person name="Riaz N."/>
            <person name="Powell S.N."/>
            <person name="Poirier J.T."/>
            <person name="Rudin C.M."/>
        </authorList>
    </citation>
    <scope>INDUCTION</scope>
</reference>
<reference key="14">
    <citation type="journal article" date="2017" name="Oncotarget">
        <title>Dynamic variations in epithelial-to-mesenchymal transition (EMT), ATM, and SLFN11 govern response to PARP inhibitors and cisplatin in small cell lung cancer.</title>
        <authorList>
            <person name="Allison Stewart C."/>
            <person name="Tong P."/>
            <person name="Cardnell R.J."/>
            <person name="Sen T."/>
            <person name="Li L."/>
            <person name="Gay C.M."/>
            <person name="Masrorpour F."/>
            <person name="Fan Y."/>
            <person name="Bara R.O."/>
            <person name="Feng Y."/>
            <person name="Ru Y."/>
            <person name="Fujimoto J."/>
            <person name="Kundu S.T."/>
            <person name="Post L.E."/>
            <person name="Yu K."/>
            <person name="Shen Y."/>
            <person name="Glisson B.S."/>
            <person name="Wistuba I."/>
            <person name="Heymach J.V."/>
            <person name="Gibbons D.L."/>
            <person name="Wang J."/>
            <person name="Byers L.A."/>
        </authorList>
    </citation>
    <scope>INDUCTION</scope>
</reference>
<reference key="15">
    <citation type="journal article" date="2018" name="Mol. Cell">
        <title>SLFN11 blocks stressed replication forks independently of ATR.</title>
        <authorList>
            <person name="Murai J."/>
            <person name="Tang S.W."/>
            <person name="Leo E."/>
            <person name="Baechler S.A."/>
            <person name="Redon C.E."/>
            <person name="Zhang H."/>
            <person name="Al Abo M."/>
            <person name="Rajapakse V.N."/>
            <person name="Nakamura E."/>
            <person name="Jenkins L.M.M."/>
            <person name="Aladjem M.I."/>
            <person name="Pommier Y."/>
        </authorList>
    </citation>
    <scope>FUNCTION</scope>
    <scope>SUBCELLULAR LOCATION</scope>
    <scope>INTERACTION WITH RPA1; MCM3 AND DHX9</scope>
    <scope>MUTAGENESIS OF GLU-669</scope>
</reference>
<reference key="16">
    <citation type="journal article" date="2018" name="Nat. Struct. Mol. Biol.">
        <title>DNA damage-induced cell death relies on SLFN11-dependent cleavage of distinct type II tRNAs.</title>
        <authorList>
            <person name="Li M."/>
            <person name="Kao E."/>
            <person name="Malone D."/>
            <person name="Gao X."/>
            <person name="Wang J.Y.J."/>
            <person name="David M."/>
        </authorList>
    </citation>
    <scope>FUNCTION</scope>
</reference>
<reference evidence="20 21 22" key="17">
    <citation type="journal article" date="2022" name="Nat. Commun.">
        <title>Mechanistic understanding of human SLFN11.</title>
        <authorList>
            <person name="Metzner F.J."/>
            <person name="Wenzl S.J."/>
            <person name="Kugler M."/>
            <person name="Krebs S."/>
            <person name="Hopfner K.P."/>
            <person name="Lammens K."/>
        </authorList>
    </citation>
    <scope>STRUCTURE BY ELECTRON MICROSCOPY (2.80 ANGSTROMS) IN COMPLEX WITH DNA AND TRNA</scope>
    <scope>FUNCTION</scope>
    <scope>SUBUNIT</scope>
    <scope>DOMAIN</scope>
    <scope>ACTIVE SITE</scope>
    <scope>CATALYTIC ACTIVITY</scope>
    <scope>MUTAGENESIS OF E209A</scope>
    <scope>E214A; K216A; Y234A; D252A AND SER-753</scope>
    <scope>DNA-BINDING</scope>
    <scope>COFACTOR</scope>
</reference>
<reference key="18">
    <citation type="journal article" date="2022" name="Proc. Natl. Acad. Sci. U.S.A.">
        <title>Human cytomegalovirus protein RL1 degrades the antiviral factor SLFN11 via recruitment of the CRL4 E3 ubiquitin ligase complex.</title>
        <authorList>
            <person name="Nightingale K."/>
            <person name="Potts M."/>
            <person name="Hunter L.M."/>
            <person name="Fielding C.A."/>
            <person name="Zerbe C.M."/>
            <person name="Fletcher-Etherington A."/>
            <person name="Nobre L."/>
            <person name="Wang E.C.Y."/>
            <person name="Strang B.L."/>
            <person name="Houghton J.W."/>
            <person name="Antrobus R."/>
            <person name="Suarez N.M."/>
            <person name="Nichols J."/>
            <person name="Davison A.J."/>
            <person name="Stanton R.J."/>
            <person name="Weekes M.P."/>
        </authorList>
    </citation>
    <scope>FUNCTION</scope>
</reference>
<evidence type="ECO:0000255" key="1"/>
<evidence type="ECO:0000269" key="2">
    <source>
    </source>
</evidence>
<evidence type="ECO:0000269" key="3">
    <source>
    </source>
</evidence>
<evidence type="ECO:0000269" key="4">
    <source>
    </source>
</evidence>
<evidence type="ECO:0000269" key="5">
    <source>
    </source>
</evidence>
<evidence type="ECO:0000269" key="6">
    <source>
    </source>
</evidence>
<evidence type="ECO:0000269" key="7">
    <source>
    </source>
</evidence>
<evidence type="ECO:0000269" key="8">
    <source>
    </source>
</evidence>
<evidence type="ECO:0000269" key="9">
    <source>
    </source>
</evidence>
<evidence type="ECO:0000269" key="10">
    <source>
    </source>
</evidence>
<evidence type="ECO:0000269" key="11">
    <source>
    </source>
</evidence>
<evidence type="ECO:0000269" key="12">
    <source>
    </source>
</evidence>
<evidence type="ECO:0000269" key="13">
    <source>
    </source>
</evidence>
<evidence type="ECO:0000269" key="14">
    <source>
    </source>
</evidence>
<evidence type="ECO:0000269" key="15">
    <source>
    </source>
</evidence>
<evidence type="ECO:0000269" key="16">
    <source>
    </source>
</evidence>
<evidence type="ECO:0000269" key="17">
    <source ref="4"/>
</evidence>
<evidence type="ECO:0000305" key="18"/>
<evidence type="ECO:0000312" key="19">
    <source>
        <dbReference type="HGNC" id="HGNC:26633"/>
    </source>
</evidence>
<evidence type="ECO:0007744" key="20">
    <source>
        <dbReference type="PDB" id="7ZEL"/>
    </source>
</evidence>
<evidence type="ECO:0007744" key="21">
    <source>
        <dbReference type="PDB" id="7ZEP"/>
    </source>
</evidence>
<evidence type="ECO:0007744" key="22">
    <source>
        <dbReference type="PDB" id="7ZES"/>
    </source>
</evidence>
<evidence type="ECO:0007829" key="23">
    <source>
        <dbReference type="PDB" id="7ZEL"/>
    </source>
</evidence>
<evidence type="ECO:0007829" key="24">
    <source>
        <dbReference type="PDB" id="9ERE"/>
    </source>
</evidence>
<evidence type="ECO:0007829" key="25">
    <source>
        <dbReference type="PDB" id="9ERF"/>
    </source>
</evidence>
<evidence type="ECO:0007829" key="26">
    <source>
        <dbReference type="PDB" id="9GMW"/>
    </source>
</evidence>
<accession>Q7Z7L1</accession>
<accession>E1P643</accession>
<accession>Q8N3S8</accession>
<accession>Q8N762</accession>
<accession>Q8TEE0</accession>
<dbReference type="EC" id="3.1.-.-" evidence="13 16"/>
<dbReference type="EMBL" id="AK074184">
    <property type="protein sequence ID" value="BAB85010.1"/>
    <property type="status" value="ALT_FRAME"/>
    <property type="molecule type" value="mRNA"/>
</dbReference>
<dbReference type="EMBL" id="AK092241">
    <property type="protein sequence ID" value="BAC03835.1"/>
    <property type="molecule type" value="mRNA"/>
</dbReference>
<dbReference type="EMBL" id="AL831964">
    <property type="protein sequence ID" value="CAD38606.2"/>
    <property type="molecule type" value="mRNA"/>
</dbReference>
<dbReference type="EMBL" id="AC060766">
    <property type="status" value="NOT_ANNOTATED_CDS"/>
    <property type="molecule type" value="Genomic_DNA"/>
</dbReference>
<dbReference type="EMBL" id="CH471147">
    <property type="protein sequence ID" value="EAW80156.1"/>
    <property type="molecule type" value="Genomic_DNA"/>
</dbReference>
<dbReference type="EMBL" id="CH471147">
    <property type="protein sequence ID" value="EAW80157.1"/>
    <property type="molecule type" value="Genomic_DNA"/>
</dbReference>
<dbReference type="EMBL" id="CH471147">
    <property type="protein sequence ID" value="EAW80158.1"/>
    <property type="molecule type" value="Genomic_DNA"/>
</dbReference>
<dbReference type="EMBL" id="BC052586">
    <property type="protein sequence ID" value="AAH52586.1"/>
    <property type="molecule type" value="mRNA"/>
</dbReference>
<dbReference type="CCDS" id="CCDS11294.1"/>
<dbReference type="RefSeq" id="NP_001098057.1">
    <property type="nucleotide sequence ID" value="NM_001104587.2"/>
</dbReference>
<dbReference type="RefSeq" id="NP_001098058.1">
    <property type="nucleotide sequence ID" value="NM_001104588.2"/>
</dbReference>
<dbReference type="RefSeq" id="NP_001098059.1">
    <property type="nucleotide sequence ID" value="NM_001104589.2"/>
</dbReference>
<dbReference type="RefSeq" id="NP_001098060.1">
    <property type="nucleotide sequence ID" value="NM_001104590.2"/>
</dbReference>
<dbReference type="RefSeq" id="NP_001362936.1">
    <property type="nucleotide sequence ID" value="NM_001376007.1"/>
</dbReference>
<dbReference type="RefSeq" id="NP_001362937.1">
    <property type="nucleotide sequence ID" value="NM_001376008.1"/>
</dbReference>
<dbReference type="RefSeq" id="NP_001362938.1">
    <property type="nucleotide sequence ID" value="NM_001376009.1"/>
</dbReference>
<dbReference type="RefSeq" id="NP_001362939.1">
    <property type="nucleotide sequence ID" value="NM_001376010.1"/>
</dbReference>
<dbReference type="RefSeq" id="NP_001362940.1">
    <property type="nucleotide sequence ID" value="NM_001376011.1"/>
</dbReference>
<dbReference type="RefSeq" id="NP_001374087.1">
    <property type="nucleotide sequence ID" value="NM_001387158.1"/>
</dbReference>
<dbReference type="RefSeq" id="NP_001374088.1">
    <property type="nucleotide sequence ID" value="NM_001387159.1"/>
</dbReference>
<dbReference type="RefSeq" id="NP_001374089.1">
    <property type="nucleotide sequence ID" value="NM_001387160.1"/>
</dbReference>
<dbReference type="RefSeq" id="NP_001374090.1">
    <property type="nucleotide sequence ID" value="NM_001387161.1"/>
</dbReference>
<dbReference type="RefSeq" id="NP_001374091.1">
    <property type="nucleotide sequence ID" value="NM_001387162.1"/>
</dbReference>
<dbReference type="RefSeq" id="NP_001374092.1">
    <property type="nucleotide sequence ID" value="NM_001387163.1"/>
</dbReference>
<dbReference type="RefSeq" id="NP_689483.3">
    <property type="nucleotide sequence ID" value="NM_152270.3"/>
</dbReference>
<dbReference type="RefSeq" id="XP_005258125.1">
    <property type="nucleotide sequence ID" value="XM_005258068.3"/>
</dbReference>
<dbReference type="RefSeq" id="XP_006722234.1">
    <property type="nucleotide sequence ID" value="XM_006722171.3"/>
</dbReference>
<dbReference type="RefSeq" id="XP_011523767.1">
    <property type="nucleotide sequence ID" value="XM_011525465.2"/>
</dbReference>
<dbReference type="RefSeq" id="XP_016880788.1">
    <property type="nucleotide sequence ID" value="XM_017025299.1"/>
</dbReference>
<dbReference type="RefSeq" id="XP_047292998.1">
    <property type="nucleotide sequence ID" value="XM_047437042.1"/>
</dbReference>
<dbReference type="PDB" id="7ZEL">
    <property type="method" value="EM"/>
    <property type="resolution" value="2.80 A"/>
    <property type="chains" value="A/B=1-901"/>
</dbReference>
<dbReference type="PDB" id="7ZEP">
    <property type="method" value="EM"/>
    <property type="resolution" value="3.20 A"/>
    <property type="chains" value="A/B=1-901"/>
</dbReference>
<dbReference type="PDB" id="7ZES">
    <property type="method" value="EM"/>
    <property type="resolution" value="3.10 A"/>
    <property type="chains" value="A/B=1-901"/>
</dbReference>
<dbReference type="PDB" id="9ERD">
    <property type="method" value="EM"/>
    <property type="resolution" value="3.72 A"/>
    <property type="chains" value="A=1-901"/>
</dbReference>
<dbReference type="PDB" id="9ERE">
    <property type="method" value="EM"/>
    <property type="resolution" value="2.82 A"/>
    <property type="chains" value="A/B=1-901"/>
</dbReference>
<dbReference type="PDB" id="9ERF">
    <property type="method" value="EM"/>
    <property type="resolution" value="2.64 A"/>
    <property type="chains" value="A/B=1-901"/>
</dbReference>
<dbReference type="PDB" id="9GMW">
    <property type="method" value="EM"/>
    <property type="resolution" value="3.00 A"/>
    <property type="chains" value="A/B=1-901"/>
</dbReference>
<dbReference type="PDB" id="9GMX">
    <property type="method" value="EM"/>
    <property type="resolution" value="2.82 A"/>
    <property type="chains" value="A/B=1-901"/>
</dbReference>
<dbReference type="PDBsum" id="7ZEL"/>
<dbReference type="PDBsum" id="7ZEP"/>
<dbReference type="PDBsum" id="7ZES"/>
<dbReference type="PDBsum" id="9ERD"/>
<dbReference type="PDBsum" id="9ERE"/>
<dbReference type="PDBsum" id="9ERF"/>
<dbReference type="PDBsum" id="9GMW"/>
<dbReference type="PDBsum" id="9GMX"/>
<dbReference type="EMDB" id="EMD-14690"/>
<dbReference type="EMDB" id="EMD-14691"/>
<dbReference type="EMDB" id="EMD-14692"/>
<dbReference type="EMDB" id="EMD-19912"/>
<dbReference type="EMDB" id="EMD-19913"/>
<dbReference type="EMDB" id="EMD-19914"/>
<dbReference type="EMDB" id="EMD-51456"/>
<dbReference type="EMDB" id="EMD-51457"/>
<dbReference type="SMR" id="Q7Z7L1"/>
<dbReference type="BioGRID" id="124851">
    <property type="interactions" value="377"/>
</dbReference>
<dbReference type="FunCoup" id="Q7Z7L1">
    <property type="interactions" value="1154"/>
</dbReference>
<dbReference type="IntAct" id="Q7Z7L1">
    <property type="interactions" value="12"/>
</dbReference>
<dbReference type="MINT" id="Q7Z7L1"/>
<dbReference type="STRING" id="9606.ENSP00000378067"/>
<dbReference type="iPTMnet" id="Q7Z7L1"/>
<dbReference type="PhosphoSitePlus" id="Q7Z7L1"/>
<dbReference type="SwissPalm" id="Q7Z7L1"/>
<dbReference type="BioMuta" id="SLFN11"/>
<dbReference type="DMDM" id="313104011"/>
<dbReference type="jPOST" id="Q7Z7L1"/>
<dbReference type="MassIVE" id="Q7Z7L1"/>
<dbReference type="PaxDb" id="9606-ENSP00000378067"/>
<dbReference type="PeptideAtlas" id="Q7Z7L1"/>
<dbReference type="ProteomicsDB" id="69561"/>
<dbReference type="Pumba" id="Q7Z7L1"/>
<dbReference type="Antibodypedia" id="15596">
    <property type="antibodies" value="58 antibodies from 17 providers"/>
</dbReference>
<dbReference type="DNASU" id="91607"/>
<dbReference type="Ensembl" id="ENST00000308377.8">
    <property type="protein sequence ID" value="ENSP00000312402.4"/>
    <property type="gene ID" value="ENSG00000172716.17"/>
</dbReference>
<dbReference type="Ensembl" id="ENST00000394566.5">
    <property type="protein sequence ID" value="ENSP00000378067.1"/>
    <property type="gene ID" value="ENSG00000172716.17"/>
</dbReference>
<dbReference type="Ensembl" id="ENST00000685675.1">
    <property type="protein sequence ID" value="ENSP00000510787.1"/>
    <property type="gene ID" value="ENSG00000172716.17"/>
</dbReference>
<dbReference type="GeneID" id="91607"/>
<dbReference type="KEGG" id="hsa:91607"/>
<dbReference type="MANE-Select" id="ENST00000685675.1">
    <property type="protein sequence ID" value="ENSP00000510787.1"/>
    <property type="RefSeq nucleotide sequence ID" value="NM_001376007.1"/>
    <property type="RefSeq protein sequence ID" value="NP_001362936.1"/>
</dbReference>
<dbReference type="UCSC" id="uc002hjg.5">
    <property type="organism name" value="human"/>
</dbReference>
<dbReference type="AGR" id="HGNC:26633"/>
<dbReference type="CTD" id="91607"/>
<dbReference type="DisGeNET" id="91607"/>
<dbReference type="GeneCards" id="SLFN11"/>
<dbReference type="HGNC" id="HGNC:26633">
    <property type="gene designation" value="SLFN11"/>
</dbReference>
<dbReference type="HPA" id="ENSG00000172716">
    <property type="expression patterns" value="Low tissue specificity"/>
</dbReference>
<dbReference type="MIM" id="614953">
    <property type="type" value="gene"/>
</dbReference>
<dbReference type="neXtProt" id="NX_Q7Z7L1"/>
<dbReference type="OpenTargets" id="ENSG00000172716"/>
<dbReference type="PharmGKB" id="PA144596358"/>
<dbReference type="VEuPathDB" id="HostDB:ENSG00000172716"/>
<dbReference type="eggNOG" id="ENOG502QWKG">
    <property type="taxonomic scope" value="Eukaryota"/>
</dbReference>
<dbReference type="GeneTree" id="ENSGT00410000025651"/>
<dbReference type="HOGENOM" id="CLU_007071_0_0_1"/>
<dbReference type="InParanoid" id="Q7Z7L1"/>
<dbReference type="OMA" id="HKLCVIP"/>
<dbReference type="OrthoDB" id="6052143at2759"/>
<dbReference type="PAN-GO" id="Q7Z7L1">
    <property type="GO annotations" value="2 GO annotations based on evolutionary models"/>
</dbReference>
<dbReference type="PhylomeDB" id="Q7Z7L1"/>
<dbReference type="TreeFam" id="TF337168"/>
<dbReference type="PathwayCommons" id="Q7Z7L1"/>
<dbReference type="SignaLink" id="Q7Z7L1"/>
<dbReference type="BioGRID-ORCS" id="91607">
    <property type="hits" value="17 hits in 1154 CRISPR screens"/>
</dbReference>
<dbReference type="ChiTaRS" id="SLFN11">
    <property type="organism name" value="human"/>
</dbReference>
<dbReference type="GeneWiki" id="SLFN11"/>
<dbReference type="GenomeRNAi" id="91607"/>
<dbReference type="Pharos" id="Q7Z7L1">
    <property type="development level" value="Tbio"/>
</dbReference>
<dbReference type="PRO" id="PR:Q7Z7L1"/>
<dbReference type="Proteomes" id="UP000005640">
    <property type="component" value="Chromosome 17"/>
</dbReference>
<dbReference type="RNAct" id="Q7Z7L1">
    <property type="molecule type" value="protein"/>
</dbReference>
<dbReference type="Bgee" id="ENSG00000172716">
    <property type="expression patterns" value="Expressed in monocyte and 140 other cell types or tissues"/>
</dbReference>
<dbReference type="ExpressionAtlas" id="Q7Z7L1">
    <property type="expression patterns" value="baseline and differential"/>
</dbReference>
<dbReference type="GO" id="GO:0005829">
    <property type="term" value="C:cytosol"/>
    <property type="evidence" value="ECO:0000314"/>
    <property type="project" value="HPA"/>
</dbReference>
<dbReference type="GO" id="GO:0005654">
    <property type="term" value="C:nucleoplasm"/>
    <property type="evidence" value="ECO:0000314"/>
    <property type="project" value="HPA"/>
</dbReference>
<dbReference type="GO" id="GO:0005634">
    <property type="term" value="C:nucleus"/>
    <property type="evidence" value="ECO:0000314"/>
    <property type="project" value="UniProtKB"/>
</dbReference>
<dbReference type="GO" id="GO:0090734">
    <property type="term" value="C:site of DNA damage"/>
    <property type="evidence" value="ECO:0000314"/>
    <property type="project" value="UniProtKB"/>
</dbReference>
<dbReference type="GO" id="GO:0005524">
    <property type="term" value="F:ATP binding"/>
    <property type="evidence" value="ECO:0007669"/>
    <property type="project" value="UniProtKB-KW"/>
</dbReference>
<dbReference type="GO" id="GO:0016887">
    <property type="term" value="F:ATP hydrolysis activity"/>
    <property type="evidence" value="ECO:0000314"/>
    <property type="project" value="UniProtKB"/>
</dbReference>
<dbReference type="GO" id="GO:0003677">
    <property type="term" value="F:DNA binding"/>
    <property type="evidence" value="ECO:0007669"/>
    <property type="project" value="UniProtKB-KW"/>
</dbReference>
<dbReference type="GO" id="GO:0004519">
    <property type="term" value="F:endonuclease activity"/>
    <property type="evidence" value="ECO:0007669"/>
    <property type="project" value="UniProtKB-KW"/>
</dbReference>
<dbReference type="GO" id="GO:0004386">
    <property type="term" value="F:helicase activity"/>
    <property type="evidence" value="ECO:0007669"/>
    <property type="project" value="UniProtKB-KW"/>
</dbReference>
<dbReference type="GO" id="GO:0000049">
    <property type="term" value="F:tRNA binding"/>
    <property type="evidence" value="ECO:0000314"/>
    <property type="project" value="UniProtKB"/>
</dbReference>
<dbReference type="GO" id="GO:0006338">
    <property type="term" value="P:chromatin remodeling"/>
    <property type="evidence" value="ECO:0000314"/>
    <property type="project" value="UniProtKB"/>
</dbReference>
<dbReference type="GO" id="GO:0051607">
    <property type="term" value="P:defense response to virus"/>
    <property type="evidence" value="ECO:0000315"/>
    <property type="project" value="UniProtKB"/>
</dbReference>
<dbReference type="GO" id="GO:0006974">
    <property type="term" value="P:DNA damage response"/>
    <property type="evidence" value="ECO:0000314"/>
    <property type="project" value="UniProtKB"/>
</dbReference>
<dbReference type="GO" id="GO:0002376">
    <property type="term" value="P:immune system process"/>
    <property type="evidence" value="ECO:0007669"/>
    <property type="project" value="UniProtKB-KW"/>
</dbReference>
<dbReference type="GO" id="GO:0008156">
    <property type="term" value="P:negative regulation of DNA replication"/>
    <property type="evidence" value="ECO:0000314"/>
    <property type="project" value="UniProtKB"/>
</dbReference>
<dbReference type="GO" id="GO:2000134">
    <property type="term" value="P:negative regulation of G1/S transition of mitotic cell cycle"/>
    <property type="evidence" value="ECO:0000315"/>
    <property type="project" value="UniProtKB"/>
</dbReference>
<dbReference type="GO" id="GO:0043111">
    <property type="term" value="P:replication fork arrest"/>
    <property type="evidence" value="ECO:0000314"/>
    <property type="project" value="UniProtKB"/>
</dbReference>
<dbReference type="FunFam" id="3.30.950.30:FF:000002">
    <property type="entry name" value="Schlafen family member 11"/>
    <property type="match status" value="1"/>
</dbReference>
<dbReference type="FunFam" id="3.40.50.300:FF:001322">
    <property type="entry name" value="Schlafen family member 11"/>
    <property type="match status" value="1"/>
</dbReference>
<dbReference type="Gene3D" id="3.40.50.300">
    <property type="entry name" value="P-loop containing nucleotide triphosphate hydrolases"/>
    <property type="match status" value="2"/>
</dbReference>
<dbReference type="Gene3D" id="3.30.950.30">
    <property type="entry name" value="Schlafen, AAA domain"/>
    <property type="match status" value="1"/>
</dbReference>
<dbReference type="InterPro" id="IPR027417">
    <property type="entry name" value="P-loop_NTPase"/>
</dbReference>
<dbReference type="InterPro" id="IPR031450">
    <property type="entry name" value="Poxin-SLFN/SLFN_N"/>
</dbReference>
<dbReference type="InterPro" id="IPR029684">
    <property type="entry name" value="Schlafen"/>
</dbReference>
<dbReference type="InterPro" id="IPR007421">
    <property type="entry name" value="Schlafen_AlbA_2_dom"/>
</dbReference>
<dbReference type="InterPro" id="IPR038461">
    <property type="entry name" value="Schlafen_AlbA_2_dom_sf"/>
</dbReference>
<dbReference type="InterPro" id="IPR018647">
    <property type="entry name" value="SLFN_3-like_DNA/RNA_helicase"/>
</dbReference>
<dbReference type="InterPro" id="IPR048729">
    <property type="entry name" value="SLFN_GTPase-like"/>
</dbReference>
<dbReference type="PANTHER" id="PTHR12155">
    <property type="entry name" value="SCHLAFEN"/>
    <property type="match status" value="1"/>
</dbReference>
<dbReference type="PANTHER" id="PTHR12155:SF45">
    <property type="entry name" value="SCHLAFEN FAMILY MEMBER 11"/>
    <property type="match status" value="1"/>
</dbReference>
<dbReference type="Pfam" id="PF17057">
    <property type="entry name" value="B3R"/>
    <property type="match status" value="1"/>
</dbReference>
<dbReference type="Pfam" id="PF09848">
    <property type="entry name" value="SLFN-g3_helicase"/>
    <property type="match status" value="1"/>
</dbReference>
<dbReference type="Pfam" id="PF04326">
    <property type="entry name" value="SLFN_AlbA_2"/>
    <property type="match status" value="1"/>
</dbReference>
<dbReference type="Pfam" id="PF21026">
    <property type="entry name" value="SLFN_GTPase-like"/>
    <property type="match status" value="1"/>
</dbReference>
<dbReference type="SUPFAM" id="SSF52540">
    <property type="entry name" value="P-loop containing nucleoside triphosphate hydrolases"/>
    <property type="match status" value="1"/>
</dbReference>
<feature type="chain" id="PRO_0000283091" description="Schlafen family member 11">
    <location>
        <begin position="1"/>
        <end position="901"/>
    </location>
</feature>
<feature type="active site" evidence="16">
    <location>
        <position position="216"/>
    </location>
</feature>
<feature type="binding site" evidence="16">
    <location>
        <position position="209"/>
    </location>
    <ligand>
        <name>Mg(2+)</name>
        <dbReference type="ChEBI" id="CHEBI:18420"/>
        <note>catalytic</note>
    </ligand>
</feature>
<feature type="binding site" evidence="16">
    <location>
        <position position="214"/>
    </location>
    <ligand>
        <name>Mg(2+)</name>
        <dbReference type="ChEBI" id="CHEBI:18420"/>
        <note>catalytic</note>
    </ligand>
</feature>
<feature type="binding site" evidence="16">
    <location>
        <position position="285"/>
    </location>
    <ligand>
        <name>Zn(2+)</name>
        <dbReference type="ChEBI" id="CHEBI:29105"/>
    </ligand>
</feature>
<feature type="binding site" evidence="16">
    <location>
        <position position="287"/>
    </location>
    <ligand>
        <name>Zn(2+)</name>
        <dbReference type="ChEBI" id="CHEBI:29105"/>
    </ligand>
</feature>
<feature type="binding site" evidence="16">
    <location>
        <position position="321"/>
    </location>
    <ligand>
        <name>Zn(2+)</name>
        <dbReference type="ChEBI" id="CHEBI:29105"/>
    </ligand>
</feature>
<feature type="binding site" evidence="16">
    <location>
        <position position="322"/>
    </location>
    <ligand>
        <name>Zn(2+)</name>
        <dbReference type="ChEBI" id="CHEBI:29105"/>
    </ligand>
</feature>
<feature type="binding site" evidence="1">
    <location>
        <begin position="599"/>
        <end position="606"/>
    </location>
    <ligand>
        <name>ATP</name>
        <dbReference type="ChEBI" id="CHEBI:30616"/>
    </ligand>
</feature>
<feature type="sequence variant" id="VAR_031492" description="In dbSNP:rs12453150." evidence="2">
    <original>V</original>
    <variation>F</variation>
    <location>
        <position position="121"/>
    </location>
</feature>
<feature type="sequence variant" id="VAR_031493" description="In dbSNP:rs4796077." evidence="2 3 4 17">
    <original>N</original>
    <variation>D</variation>
    <location>
        <position position="301"/>
    </location>
</feature>
<feature type="sequence variant" id="VAR_062186" description="In dbSNP:rs9898983.">
    <original>R</original>
    <variation>L</variation>
    <location>
        <position position="489"/>
    </location>
</feature>
<feature type="sequence variant" id="VAR_031494" description="In dbSNP:rs3803860.">
    <original>Y</original>
    <variation>C</variation>
    <location>
        <position position="822"/>
    </location>
</feature>
<feature type="mutagenesis site" description="Complete loss of endonuclease activity." evidence="16">
    <original>E</original>
    <variation>A</variation>
    <location>
        <position position="209"/>
    </location>
</feature>
<feature type="mutagenesis site" description="Complete loss of endonuclease activity." evidence="16">
    <original>E</original>
    <variation>A</variation>
    <location>
        <position position="214"/>
    </location>
</feature>
<feature type="mutagenesis site" description="Complete loss of endonuclease activity." evidence="16">
    <original>K</original>
    <variation>A</variation>
    <location>
        <position position="216"/>
    </location>
</feature>
<feature type="mutagenesis site" description="No effect on endonuclease activity." evidence="16">
    <original>Y</original>
    <variation>A</variation>
    <location>
        <position position="234"/>
    </location>
</feature>
<feature type="mutagenesis site" description="Slight increase in endonuclease activity." evidence="16">
    <original>D</original>
    <variation>A</variation>
    <location>
        <position position="252"/>
    </location>
</feature>
<feature type="mutagenesis site" description="Abolishes ATPase activity without affecting its role in DNA damage response; when associated with A-668." evidence="9">
    <original>K</original>
    <variation>M</variation>
    <location>
        <position position="605"/>
    </location>
</feature>
<feature type="mutagenesis site" description="Abolishes ATPase activity without affecting its role in DNA damage response; when associated with M-605." evidence="9">
    <original>D</original>
    <variation>A</variation>
    <location>
        <position position="668"/>
    </location>
</feature>
<feature type="mutagenesis site" description="Abolishes ATPase activity, leading to abolish ability to inhibit DNA replication without affecting subcellular location." evidence="13">
    <original>E</original>
    <variation>Q</variation>
    <location>
        <position position="669"/>
    </location>
</feature>
<feature type="mutagenesis site" description="Complete loss of tRNA cleavage and ssDNA binding." evidence="16">
    <original>S</original>
    <variation>D</variation>
    <location>
        <position position="753"/>
    </location>
</feature>
<feature type="sequence conflict" description="In Ref. 1; BAC03835." evidence="18" ref="1">
    <original>N</original>
    <variation>S</variation>
    <location>
        <position position="20"/>
    </location>
</feature>
<feature type="sequence conflict" description="In Ref. 1; BAC03835." evidence="18" ref="1">
    <original>M</original>
    <variation>T</variation>
    <location>
        <position position="143"/>
    </location>
</feature>
<feature type="sequence conflict" description="In Ref. 2; CAD38606." evidence="18" ref="2">
    <original>V</original>
    <variation>M</variation>
    <location>
        <position position="324"/>
    </location>
</feature>
<feature type="sequence conflict" description="In Ref. 1; BAC03835 and 2; CAD38606." evidence="18" ref="1 2">
    <original>I</original>
    <variation>V</variation>
    <location>
        <position position="665"/>
    </location>
</feature>
<feature type="strand" evidence="23">
    <location>
        <begin position="9"/>
        <end position="11"/>
    </location>
</feature>
<feature type="strand" evidence="25">
    <location>
        <begin position="14"/>
        <end position="16"/>
    </location>
</feature>
<feature type="strand" evidence="25">
    <location>
        <begin position="18"/>
        <end position="23"/>
    </location>
</feature>
<feature type="helix" evidence="25">
    <location>
        <begin position="28"/>
        <end position="32"/>
    </location>
</feature>
<feature type="helix" evidence="25">
    <location>
        <begin position="36"/>
        <end position="55"/>
    </location>
</feature>
<feature type="strand" evidence="25">
    <location>
        <begin position="59"/>
        <end position="64"/>
    </location>
</feature>
<feature type="strand" evidence="25">
    <location>
        <begin position="66"/>
        <end position="69"/>
    </location>
</feature>
<feature type="helix" evidence="25">
    <location>
        <begin position="75"/>
        <end position="85"/>
    </location>
</feature>
<feature type="helix" evidence="25">
    <location>
        <begin position="90"/>
        <end position="92"/>
    </location>
</feature>
<feature type="strand" evidence="25">
    <location>
        <begin position="94"/>
        <end position="99"/>
    </location>
</feature>
<feature type="strand" evidence="25">
    <location>
        <begin position="102"/>
        <end position="107"/>
    </location>
</feature>
<feature type="strand" evidence="25">
    <location>
        <begin position="113"/>
        <end position="115"/>
    </location>
</feature>
<feature type="helix" evidence="25">
    <location>
        <begin position="117"/>
        <end position="120"/>
    </location>
</feature>
<feature type="strand" evidence="25">
    <location>
        <begin position="133"/>
        <end position="136"/>
    </location>
</feature>
<feature type="strand" evidence="25">
    <location>
        <begin position="139"/>
        <end position="142"/>
    </location>
</feature>
<feature type="helix" evidence="25">
    <location>
        <begin position="145"/>
        <end position="156"/>
    </location>
</feature>
<feature type="helix" evidence="25">
    <location>
        <begin position="189"/>
        <end position="195"/>
    </location>
</feature>
<feature type="strand" evidence="25">
    <location>
        <begin position="197"/>
        <end position="200"/>
    </location>
</feature>
<feature type="strand" evidence="25">
    <location>
        <begin position="211"/>
        <end position="216"/>
    </location>
</feature>
<feature type="helix" evidence="25">
    <location>
        <begin position="223"/>
        <end position="240"/>
    </location>
</feature>
<feature type="strand" evidence="25">
    <location>
        <begin position="244"/>
        <end position="250"/>
    </location>
</feature>
<feature type="turn" evidence="25">
    <location>
        <begin position="252"/>
        <end position="254"/>
    </location>
</feature>
<feature type="turn" evidence="25">
    <location>
        <begin position="262"/>
        <end position="264"/>
    </location>
</feature>
<feature type="helix" evidence="25">
    <location>
        <begin position="267"/>
        <end position="280"/>
    </location>
</feature>
<feature type="strand" evidence="25">
    <location>
        <begin position="286"/>
        <end position="288"/>
    </location>
</feature>
<feature type="strand" evidence="25">
    <location>
        <begin position="295"/>
        <end position="304"/>
    </location>
</feature>
<feature type="strand" evidence="25">
    <location>
        <begin position="307"/>
        <end position="317"/>
    </location>
</feature>
<feature type="strand" evidence="25">
    <location>
        <begin position="321"/>
        <end position="324"/>
    </location>
</feature>
<feature type="strand" evidence="24">
    <location>
        <begin position="326"/>
        <end position="328"/>
    </location>
</feature>
<feature type="strand" evidence="25">
    <location>
        <begin position="332"/>
        <end position="335"/>
    </location>
</feature>
<feature type="strand" evidence="25">
    <location>
        <begin position="338"/>
        <end position="341"/>
    </location>
</feature>
<feature type="helix" evidence="25">
    <location>
        <begin position="344"/>
        <end position="352"/>
    </location>
</feature>
<feature type="helix" evidence="25">
    <location>
        <begin position="384"/>
        <end position="397"/>
    </location>
</feature>
<feature type="strand" evidence="25">
    <location>
        <begin position="402"/>
        <end position="409"/>
    </location>
</feature>
<feature type="helix" evidence="25">
    <location>
        <begin position="410"/>
        <end position="419"/>
    </location>
</feature>
<feature type="helix" evidence="25">
    <location>
        <begin position="423"/>
        <end position="430"/>
    </location>
</feature>
<feature type="turn" evidence="25">
    <location>
        <begin position="431"/>
        <end position="433"/>
    </location>
</feature>
<feature type="strand" evidence="25">
    <location>
        <begin position="436"/>
        <end position="443"/>
    </location>
</feature>
<feature type="helix" evidence="25">
    <location>
        <begin position="445"/>
        <end position="448"/>
    </location>
</feature>
<feature type="strand" evidence="25">
    <location>
        <begin position="457"/>
        <end position="465"/>
    </location>
</feature>
<feature type="strand" evidence="25">
    <location>
        <begin position="471"/>
        <end position="478"/>
    </location>
</feature>
<feature type="helix" evidence="25">
    <location>
        <begin position="483"/>
        <end position="500"/>
    </location>
</feature>
<feature type="strand" evidence="25">
    <location>
        <begin position="511"/>
        <end position="517"/>
    </location>
</feature>
<feature type="helix" evidence="25">
    <location>
        <begin position="537"/>
        <end position="539"/>
    </location>
</feature>
<feature type="helix" evidence="25">
    <location>
        <begin position="544"/>
        <end position="559"/>
    </location>
</feature>
<feature type="helix" evidence="25">
    <location>
        <begin position="564"/>
        <end position="585"/>
    </location>
</feature>
<feature type="helix" evidence="25">
    <location>
        <begin position="586"/>
        <end position="588"/>
    </location>
</feature>
<feature type="turn" evidence="25">
    <location>
        <begin position="589"/>
        <end position="591"/>
    </location>
</feature>
<feature type="strand" evidence="25">
    <location>
        <begin position="593"/>
        <end position="599"/>
    </location>
</feature>
<feature type="helix" evidence="25">
    <location>
        <begin position="605"/>
        <end position="620"/>
    </location>
</feature>
<feature type="helix" evidence="25">
    <location>
        <begin position="624"/>
        <end position="626"/>
    </location>
</feature>
<feature type="strand" evidence="25">
    <location>
        <begin position="627"/>
        <end position="632"/>
    </location>
</feature>
<feature type="helix" evidence="25">
    <location>
        <begin position="634"/>
        <end position="641"/>
    </location>
</feature>
<feature type="turn" evidence="25">
    <location>
        <begin position="642"/>
        <end position="644"/>
    </location>
</feature>
<feature type="strand" evidence="25">
    <location>
        <begin position="645"/>
        <end position="650"/>
    </location>
</feature>
<feature type="helix" evidence="25">
    <location>
        <begin position="651"/>
        <end position="656"/>
    </location>
</feature>
<feature type="strand" evidence="25">
    <location>
        <begin position="664"/>
        <end position="667"/>
    </location>
</feature>
<feature type="helix" evidence="25">
    <location>
        <begin position="670"/>
        <end position="672"/>
    </location>
</feature>
<feature type="strand" evidence="26">
    <location>
        <begin position="675"/>
        <end position="677"/>
    </location>
</feature>
<feature type="helix" evidence="25">
    <location>
        <begin position="680"/>
        <end position="689"/>
    </location>
</feature>
<feature type="strand" evidence="25">
    <location>
        <begin position="692"/>
        <end position="695"/>
    </location>
</feature>
<feature type="strand" evidence="25">
    <location>
        <begin position="698"/>
        <end position="702"/>
    </location>
</feature>
<feature type="helix" evidence="25">
    <location>
        <begin position="704"/>
        <end position="706"/>
    </location>
</feature>
<feature type="turn" evidence="25">
    <location>
        <begin position="718"/>
        <end position="720"/>
    </location>
</feature>
<feature type="strand" evidence="25">
    <location>
        <begin position="723"/>
        <end position="727"/>
    </location>
</feature>
<feature type="helix" evidence="25">
    <location>
        <begin position="735"/>
        <end position="750"/>
    </location>
</feature>
<feature type="strand" evidence="23">
    <location>
        <begin position="754"/>
        <end position="756"/>
    </location>
</feature>
<feature type="helix" evidence="25">
    <location>
        <begin position="760"/>
        <end position="762"/>
    </location>
</feature>
<feature type="strand" evidence="25">
    <location>
        <begin position="776"/>
        <end position="779"/>
    </location>
</feature>
<feature type="helix" evidence="25">
    <location>
        <begin position="785"/>
        <end position="802"/>
    </location>
</feature>
<feature type="helix" evidence="25">
    <location>
        <begin position="806"/>
        <end position="808"/>
    </location>
</feature>
<feature type="strand" evidence="25">
    <location>
        <begin position="809"/>
        <end position="814"/>
    </location>
</feature>
<feature type="helix" evidence="25">
    <location>
        <begin position="816"/>
        <end position="818"/>
    </location>
</feature>
<feature type="helix" evidence="25">
    <location>
        <begin position="819"/>
        <end position="830"/>
    </location>
</feature>
<feature type="helix" evidence="25">
    <location>
        <begin position="831"/>
        <end position="833"/>
    </location>
</feature>
<feature type="helix" evidence="25">
    <location>
        <begin position="841"/>
        <end position="843"/>
    </location>
</feature>
<feature type="strand" evidence="25">
    <location>
        <begin position="846"/>
        <end position="853"/>
    </location>
</feature>
<feature type="helix" evidence="25">
    <location>
        <begin position="855"/>
        <end position="857"/>
    </location>
</feature>
<feature type="strand" evidence="25">
    <location>
        <begin position="862"/>
        <end position="868"/>
    </location>
</feature>
<feature type="helix" evidence="25">
    <location>
        <begin position="875"/>
        <end position="877"/>
    </location>
</feature>
<feature type="helix" evidence="25">
    <location>
        <begin position="878"/>
        <end position="886"/>
    </location>
</feature>
<feature type="strand" evidence="25">
    <location>
        <begin position="889"/>
        <end position="896"/>
    </location>
</feature>
<proteinExistence type="evidence at protein level"/>
<organism>
    <name type="scientific">Homo sapiens</name>
    <name type="common">Human</name>
    <dbReference type="NCBI Taxonomy" id="9606"/>
    <lineage>
        <taxon>Eukaryota</taxon>
        <taxon>Metazoa</taxon>
        <taxon>Chordata</taxon>
        <taxon>Craniata</taxon>
        <taxon>Vertebrata</taxon>
        <taxon>Euteleostomi</taxon>
        <taxon>Mammalia</taxon>
        <taxon>Eutheria</taxon>
        <taxon>Euarchontoglires</taxon>
        <taxon>Primates</taxon>
        <taxon>Haplorrhini</taxon>
        <taxon>Catarrhini</taxon>
        <taxon>Hominidae</taxon>
        <taxon>Homo</taxon>
    </lineage>
</organism>
<name>SLN11_HUMAN</name>
<gene>
    <name evidence="19" type="primary">SLFN11</name>
</gene>
<sequence>MEANQCPLVVEPSYPDLVINVGEVTLGEENRKKLQKIQRDQEKERVMRAACALLNSGGGVIRMAKKVEHPVEMGLDLEQSLRELIQSSDLQAFFETKQQGRCFYIFVKSWSSGPFPEDRSVKPRLCSLSSSLYRRSETSVRSMDSREAFCFLKTKRKPKILEEGPFHKIHKGVYQELPNSDPADPNSDPADLIFQKDYLEYGEILPFPESQLVEFKQFSTKHFQEYVKRTIPEYVPAFANTGGGYLFIGVDDKSREVLGCAKENVDPDSLRRKIEQAIYKLPCVHFCQPQRPITFTLKIVNVLKRGELYGYACMIRVNPFCCAVFSEAPNSWIVEDKYVCSLTTEKWVGMMTDTDPDLLQLSEDFECQLSLSSGPPLSRPVYSKKGLEHKKELQQLLFSVPPGYLRYTPESLWRDLISEHRGLEELINKQMQPFFRGILIFSRSWAVDLNLQEKPGVICDALLIAQNSTPILYTILREQDAEGQDYCTRTAFTLKQKLVNMGGYTGKVCVRAKVLCLSPESSAEALEAAVSPMDYPASYSLAGTQHMEALLQSLVIVLLGFRSLLSDQLGCEVLNLLTAQQYEIFSRSLRKNRELFVHGLPGSGKTIMAMKIMEKIRNVFHCEAHRILYVCENQPLRNFISDRNICRAETRKTFLRENFEHIQHIVIDEAQNFRTEDGDWYGKAKSITRRAKGGPGILWIFLDYFQTSHLDCSGLPPLSDQYPREELTRIVRNADPIAKYLQKEMQVIRSNPSFNIPTGCLEVFPEAEWSQGVQGTLRIKKYLTVEQIMTCVADTCRRFFDRGYSPKDVAVLVSTAKEVEHYKYELLKAMRKKRVVQLSDACDMLGDHIVLDSVRRFSGLERSIVFGIHPRTADPAILPNVLICLASRAKQHLYIFPWGGH</sequence>
<protein>
    <recommendedName>
        <fullName evidence="18">Schlafen family member 11</fullName>
        <ecNumber evidence="13 16">3.1.-.-</ecNumber>
    </recommendedName>
</protein>
<comment type="function">
    <text evidence="6 7 9 13 14 15 16">Inhibitor of DNA replication that promotes cell death in response to DNA damage (PubMed:22927417, PubMed:26658330, PubMed:29395061). Acts as a guardian of the genome by killing cells with defective replication (PubMed:29395061). Persistently blocks stressed replication forks by opening chromatin across replication initiation sites at stressed replication forks, possibly leading to unwind DNA ahead of the MCM helicase and block fork progression, ultimately leading to cell death (PubMed:29395061). Upon DNA damage, inhibits translation of ATR or ATM based on distinct codon usage without disrupting early DNA damage response signaling (PubMed:30374083). Antiviral restriction factor with manganese-dependent type II tRNA endoribonuclease (PubMed:36115853). A single tRNA molecule is bound and cleaved by the SLFN11 dimer (PubMed:36115853). Specifically abrogates the production of retroviruses such as human immunodeficiency virus 1 (HIV-1) by acting as a specific inhibitor of the synthesis of retroviruses encoded proteins in a codon-usage-dependent manner (PubMed:23000900). Impairs the replication of human cytomegalovirus (HCMV) and some Flaviviruses (PubMed:35105802, PubMed:36115853). Exploits the unique viral codon bias towards A/T nucleotides (PubMed:23000900). Also acts as an interferon (IFN)-induced antiviral protein which acts as an inhibitor of retrovirus protein synthesis (PubMed:23000900).</text>
</comment>
<comment type="cofactor">
    <cofactor evidence="16">
        <name>Mg(2+)</name>
        <dbReference type="ChEBI" id="CHEBI:18420"/>
    </cofactor>
</comment>
<comment type="subunit">
    <text evidence="8 9 13 16">Homodimer (PubMed:36115853). Interacts with MCM3 (PubMed:29395061). Interacts with DHX9 (PubMed:26625211, PubMed:29395061). Interacts with RPA1 (PubMed:26658330, PubMed:29395061).</text>
</comment>
<comment type="subcellular location">
    <subcellularLocation>
        <location evidence="6 9 13">Nucleus</location>
    </subcellularLocation>
    <subcellularLocation>
        <location evidence="9 13">Chromosome</location>
    </subcellularLocation>
    <text evidence="9 13">Recruited to stressed replication forks carrying extended RPA filaments (PubMed:29395061). Recruited to DNA damage sites via interaction with RPA1 (PubMed:26658330, PubMed:29395061).</text>
</comment>
<comment type="tissue specificity">
    <text evidence="6">Exhibits a wider expression range in ovarian and colon adenocarcinoma than in their corresponding healthy tissues.</text>
</comment>
<comment type="induction">
    <text evidence="5 7 8 10 11 12">Down-regulated in small cell lung cancer (SCLC) cells resistant to PARP inhibitor drugs (PubMed:26625211, PubMed:27440269, PubMed:28196596, PubMed:28212573). Up-regulated by type I interferons, poly-IC and poly-dAdT (PubMed:20956525, PubMed:23000900).</text>
</comment>
<comment type="domain">
    <text evidence="16">The N-terminus contains an endonuclease domain. The C-terminus displays homology to superfamily I DNA/RNA helicases, although it is in an autoinhibited conformation.</text>
</comment>
<comment type="miscellaneous">
    <text evidence="8 10 11 12 13">Dominant determinant of sensitivity to DNA-damaging anticancer drugs: acts by mediating cell death in response to DNA damage induced by anticancer drugs (PubMed:29395061). Down-regulated in a number of chemoresistant tumors (PubMed:26625211, PubMed:27440269, PubMed:28196596, PubMed:28212573).</text>
</comment>
<comment type="similarity">
    <text evidence="18">Belongs to the Schlafen family. Subgroup III subfamily.</text>
</comment>
<comment type="sequence caution" evidence="18">
    <conflict type="frameshift">
        <sequence resource="EMBL-CDS" id="BAB85010"/>
    </conflict>
</comment>